<organism>
    <name type="scientific">Bos taurus</name>
    <name type="common">Bovine</name>
    <dbReference type="NCBI Taxonomy" id="9913"/>
    <lineage>
        <taxon>Eukaryota</taxon>
        <taxon>Metazoa</taxon>
        <taxon>Chordata</taxon>
        <taxon>Craniata</taxon>
        <taxon>Vertebrata</taxon>
        <taxon>Euteleostomi</taxon>
        <taxon>Mammalia</taxon>
        <taxon>Eutheria</taxon>
        <taxon>Laurasiatheria</taxon>
        <taxon>Artiodactyla</taxon>
        <taxon>Ruminantia</taxon>
        <taxon>Pecora</taxon>
        <taxon>Bovidae</taxon>
        <taxon>Bovinae</taxon>
        <taxon>Bos</taxon>
    </lineage>
</organism>
<evidence type="ECO:0000250" key="1">
    <source>
        <dbReference type="UniProtKB" id="O75380"/>
    </source>
</evidence>
<evidence type="ECO:0000269" key="2">
    <source>
    </source>
</evidence>
<evidence type="ECO:0000269" key="3">
    <source>
    </source>
</evidence>
<evidence type="ECO:0000269" key="4">
    <source>
    </source>
</evidence>
<evidence type="ECO:0000305" key="5"/>
<evidence type="ECO:0000305" key="6">
    <source>
    </source>
</evidence>
<evidence type="ECO:0007829" key="7">
    <source>
        <dbReference type="PDB" id="7QSM"/>
    </source>
</evidence>
<evidence type="ECO:0007829" key="8">
    <source>
        <dbReference type="PDB" id="7QSO"/>
    </source>
</evidence>
<feature type="transit peptide" description="Mitochondrion" evidence="4">
    <location>
        <begin position="1"/>
        <end position="28"/>
    </location>
</feature>
<feature type="chain" id="PRO_0000020019" description="NADH dehydrogenase [ubiquinone] iron-sulfur protein 6, mitochondrial">
    <location>
        <begin position="29"/>
        <end position="124"/>
    </location>
</feature>
<feature type="strand" evidence="8">
    <location>
        <begin position="34"/>
        <end position="36"/>
    </location>
</feature>
<feature type="helix" evidence="7">
    <location>
        <begin position="51"/>
        <end position="56"/>
    </location>
</feature>
<feature type="helix" evidence="7">
    <location>
        <begin position="68"/>
        <end position="74"/>
    </location>
</feature>
<feature type="strand" evidence="7">
    <location>
        <begin position="78"/>
        <end position="87"/>
    </location>
</feature>
<feature type="helix" evidence="7">
    <location>
        <begin position="92"/>
        <end position="94"/>
    </location>
</feature>
<feature type="strand" evidence="7">
    <location>
        <begin position="99"/>
        <end position="102"/>
    </location>
</feature>
<feature type="strand" evidence="7">
    <location>
        <begin position="106"/>
        <end position="108"/>
    </location>
</feature>
<feature type="turn" evidence="7">
    <location>
        <begin position="113"/>
        <end position="115"/>
    </location>
</feature>
<feature type="strand" evidence="7">
    <location>
        <begin position="118"/>
        <end position="122"/>
    </location>
</feature>
<comment type="function">
    <text evidence="1">Accessory subunit of the mitochondrial membrane respiratory chain NADH dehydrogenase (Complex I), that is believed not to be involved in catalysis. Complex I functions in the transfer of electrons from NADH to the respiratory chain. The immediate electron acceptor for the enzyme is believed to be ubiquinone.</text>
</comment>
<comment type="subunit">
    <text evidence="2 3">Mammalian complex I is composed of 45 different subunits. This is a component of the iron-sulfur (IP) fragment of the enzyme.</text>
</comment>
<comment type="subcellular location">
    <subcellularLocation>
        <location evidence="6">Mitochondrion inner membrane</location>
        <topology evidence="5">Peripheral membrane protein</topology>
        <orientation evidence="5">Matrix side</orientation>
    </subcellularLocation>
</comment>
<comment type="similarity">
    <text evidence="5">Belongs to the complex I NDUFS6 subunit family.</text>
</comment>
<proteinExistence type="evidence at protein level"/>
<reference key="1">
    <citation type="journal article" date="1992" name="J. Mol. Biol.">
        <title>Sequences of 20 subunits of NADH:ubiquinone oxidoreductase from bovine heart mitochondria. Application of a novel strategy for sequencing proteins using the polymerase chain reaction.</title>
        <authorList>
            <person name="Walker J.E."/>
            <person name="Arizmendi J.M."/>
            <person name="Dupuis A."/>
            <person name="Fearnley I.M."/>
            <person name="Finel M."/>
            <person name="Medd S.M."/>
            <person name="Pilkington S.J."/>
            <person name="Runswick M.J."/>
            <person name="Skehel J.M."/>
        </authorList>
    </citation>
    <scope>NUCLEOTIDE SEQUENCE [MRNA]</scope>
    <source>
        <tissue>Heart</tissue>
    </source>
</reference>
<reference key="2">
    <citation type="journal article" date="1991" name="J. Biochem.">
        <title>The amino acid sequences of two 13 kDa polypeptides and partial amino acid sequence of 30 kDa polypeptide of complex I from bovine heart mitochondria: possible location of iron-sulfur clusters.</title>
        <authorList>
            <person name="Masui R."/>
            <person name="Wakabayashi S."/>
            <person name="Matsubara H."/>
            <person name="Hatefi Y."/>
        </authorList>
    </citation>
    <scope>PROTEIN SEQUENCE OF 29-124</scope>
    <source>
        <tissue>Heart</tissue>
    </source>
</reference>
<reference key="3">
    <citation type="journal article" date="2008" name="Anal. Biochem.">
        <title>Subunit analysis of bovine heart complex I by reversed-phase high-performance liquid chromatography, electrospray ionization-tandem mass spectrometry, and matrix-assisted laser desorption/ionization-time-of-flight mass spectrometry.</title>
        <authorList>
            <person name="Lemma-Gray P."/>
            <person name="Valusova E."/>
            <person name="Carroll C.A."/>
            <person name="Weintraub S.T."/>
            <person name="Musatov A."/>
            <person name="Robinson N.C."/>
        </authorList>
    </citation>
    <scope>SUBUNIT</scope>
    <scope>IDENTIFICATION IN COMPLEX I</scope>
    <scope>SUBCELLULAR LOCATION</scope>
</reference>
<protein>
    <recommendedName>
        <fullName>NADH dehydrogenase [ubiquinone] iron-sulfur protein 6, mitochondrial</fullName>
    </recommendedName>
    <alternativeName>
        <fullName>Complex I-13kD-A</fullName>
        <shortName>CI-13kD-A</shortName>
    </alternativeName>
    <alternativeName>
        <fullName>NADH-ubiquinone oxidoreductase 13 kDa-A subunit</fullName>
    </alternativeName>
</protein>
<dbReference type="EMBL" id="X63221">
    <property type="protein sequence ID" value="CAA44906.1"/>
    <property type="molecule type" value="mRNA"/>
</dbReference>
<dbReference type="PIR" id="S28238">
    <property type="entry name" value="S28238"/>
</dbReference>
<dbReference type="RefSeq" id="NP_787004.1">
    <property type="nucleotide sequence ID" value="NM_175810.2"/>
</dbReference>
<dbReference type="PDB" id="5LC5">
    <property type="method" value="EM"/>
    <property type="resolution" value="4.35 A"/>
    <property type="chains" value="R=87-121"/>
</dbReference>
<dbReference type="PDB" id="5LDW">
    <property type="method" value="EM"/>
    <property type="resolution" value="4.27 A"/>
    <property type="chains" value="R=87-121"/>
</dbReference>
<dbReference type="PDB" id="5LDX">
    <property type="method" value="EM"/>
    <property type="resolution" value="5.60 A"/>
    <property type="chains" value="R=87-121"/>
</dbReference>
<dbReference type="PDB" id="5LNK">
    <property type="method" value="EM"/>
    <property type="resolution" value="3.90 A"/>
    <property type="chains" value="b=29-124"/>
</dbReference>
<dbReference type="PDB" id="5O31">
    <property type="method" value="EM"/>
    <property type="resolution" value="4.13 A"/>
    <property type="chains" value="R=29-124"/>
</dbReference>
<dbReference type="PDB" id="7DGQ">
    <property type="method" value="EM"/>
    <property type="resolution" value="5.00 A"/>
    <property type="chains" value="I=29-124"/>
</dbReference>
<dbReference type="PDB" id="7DGR">
    <property type="method" value="EM"/>
    <property type="resolution" value="4.60 A"/>
    <property type="chains" value="I=29-124"/>
</dbReference>
<dbReference type="PDB" id="7DGS">
    <property type="method" value="EM"/>
    <property type="resolution" value="7.80 A"/>
    <property type="chains" value="I=29-124"/>
</dbReference>
<dbReference type="PDB" id="7DGZ">
    <property type="method" value="EM"/>
    <property type="resolution" value="3.80 A"/>
    <property type="chains" value="I=29-124"/>
</dbReference>
<dbReference type="PDB" id="7DH0">
    <property type="method" value="EM"/>
    <property type="resolution" value="4.20 A"/>
    <property type="chains" value="I=29-124"/>
</dbReference>
<dbReference type="PDB" id="7DKF">
    <property type="method" value="EM"/>
    <property type="resolution" value="8.30 A"/>
    <property type="chains" value="I2=29-124"/>
</dbReference>
<dbReference type="PDB" id="7QSD">
    <property type="method" value="EM"/>
    <property type="resolution" value="3.10 A"/>
    <property type="chains" value="R=1-124"/>
</dbReference>
<dbReference type="PDB" id="7QSK">
    <property type="method" value="EM"/>
    <property type="resolution" value="2.84 A"/>
    <property type="chains" value="R=1-124"/>
</dbReference>
<dbReference type="PDB" id="7QSL">
    <property type="method" value="EM"/>
    <property type="resolution" value="2.76 A"/>
    <property type="chains" value="R=1-124"/>
</dbReference>
<dbReference type="PDB" id="7QSM">
    <property type="method" value="EM"/>
    <property type="resolution" value="2.30 A"/>
    <property type="chains" value="R=1-124"/>
</dbReference>
<dbReference type="PDB" id="7QSN">
    <property type="method" value="EM"/>
    <property type="resolution" value="2.81 A"/>
    <property type="chains" value="R=1-124"/>
</dbReference>
<dbReference type="PDB" id="7QSO">
    <property type="method" value="EM"/>
    <property type="resolution" value="3.02 A"/>
    <property type="chains" value="R=1-124"/>
</dbReference>
<dbReference type="PDB" id="7R41">
    <property type="method" value="EM"/>
    <property type="resolution" value="2.30 A"/>
    <property type="chains" value="R=1-124"/>
</dbReference>
<dbReference type="PDB" id="7R42">
    <property type="method" value="EM"/>
    <property type="resolution" value="2.30 A"/>
    <property type="chains" value="R=1-124"/>
</dbReference>
<dbReference type="PDB" id="7R43">
    <property type="method" value="EM"/>
    <property type="resolution" value="2.40 A"/>
    <property type="chains" value="R=1-124"/>
</dbReference>
<dbReference type="PDB" id="7R44">
    <property type="method" value="EM"/>
    <property type="resolution" value="2.40 A"/>
    <property type="chains" value="R=1-124"/>
</dbReference>
<dbReference type="PDB" id="7R45">
    <property type="method" value="EM"/>
    <property type="resolution" value="2.40 A"/>
    <property type="chains" value="R=1-124"/>
</dbReference>
<dbReference type="PDB" id="7R46">
    <property type="method" value="EM"/>
    <property type="resolution" value="2.40 A"/>
    <property type="chains" value="R=1-124"/>
</dbReference>
<dbReference type="PDB" id="7R47">
    <property type="method" value="EM"/>
    <property type="resolution" value="2.30 A"/>
    <property type="chains" value="R=1-124"/>
</dbReference>
<dbReference type="PDB" id="7R48">
    <property type="method" value="EM"/>
    <property type="resolution" value="2.30 A"/>
    <property type="chains" value="R=1-124"/>
</dbReference>
<dbReference type="PDB" id="7R4C">
    <property type="method" value="EM"/>
    <property type="resolution" value="2.30 A"/>
    <property type="chains" value="R=1-124"/>
</dbReference>
<dbReference type="PDB" id="7R4D">
    <property type="method" value="EM"/>
    <property type="resolution" value="2.30 A"/>
    <property type="chains" value="R=1-124"/>
</dbReference>
<dbReference type="PDB" id="7R4F">
    <property type="method" value="EM"/>
    <property type="resolution" value="2.40 A"/>
    <property type="chains" value="R=1-124"/>
</dbReference>
<dbReference type="PDB" id="7R4G">
    <property type="method" value="EM"/>
    <property type="resolution" value="2.50 A"/>
    <property type="chains" value="R=1-124"/>
</dbReference>
<dbReference type="PDB" id="8Q0A">
    <property type="method" value="EM"/>
    <property type="resolution" value="3.10 A"/>
    <property type="chains" value="R=1-124"/>
</dbReference>
<dbReference type="PDB" id="8Q0F">
    <property type="method" value="EM"/>
    <property type="resolution" value="3.10 A"/>
    <property type="chains" value="R=1-124"/>
</dbReference>
<dbReference type="PDB" id="8Q0J">
    <property type="method" value="EM"/>
    <property type="resolution" value="3.80 A"/>
    <property type="chains" value="R=1-124"/>
</dbReference>
<dbReference type="PDB" id="8Q0M">
    <property type="method" value="EM"/>
    <property type="resolution" value="3.10 A"/>
    <property type="chains" value="R=1-124"/>
</dbReference>
<dbReference type="PDB" id="8Q0O">
    <property type="method" value="EM"/>
    <property type="resolution" value="3.10 A"/>
    <property type="chains" value="R=1-124"/>
</dbReference>
<dbReference type="PDB" id="8Q0Q">
    <property type="method" value="EM"/>
    <property type="resolution" value="3.60 A"/>
    <property type="chains" value="R=1-124"/>
</dbReference>
<dbReference type="PDB" id="8Q1P">
    <property type="method" value="EM"/>
    <property type="resolution" value="2.90 A"/>
    <property type="chains" value="R=1-124"/>
</dbReference>
<dbReference type="PDB" id="8Q1U">
    <property type="method" value="EM"/>
    <property type="resolution" value="3.30 A"/>
    <property type="chains" value="R=1-124"/>
</dbReference>
<dbReference type="PDB" id="8Q1Y">
    <property type="method" value="EM"/>
    <property type="resolution" value="2.60 A"/>
    <property type="chains" value="R=1-124"/>
</dbReference>
<dbReference type="PDB" id="8Q25">
    <property type="method" value="EM"/>
    <property type="resolution" value="2.80 A"/>
    <property type="chains" value="R=1-124"/>
</dbReference>
<dbReference type="PDB" id="8Q45">
    <property type="method" value="EM"/>
    <property type="resolution" value="2.70 A"/>
    <property type="chains" value="R=1-124"/>
</dbReference>
<dbReference type="PDB" id="8Q46">
    <property type="method" value="EM"/>
    <property type="resolution" value="2.60 A"/>
    <property type="chains" value="R=1-124"/>
</dbReference>
<dbReference type="PDB" id="8Q47">
    <property type="method" value="EM"/>
    <property type="resolution" value="2.90 A"/>
    <property type="chains" value="R=1-124"/>
</dbReference>
<dbReference type="PDB" id="8Q48">
    <property type="method" value="EM"/>
    <property type="resolution" value="2.50 A"/>
    <property type="chains" value="R=1-124"/>
</dbReference>
<dbReference type="PDB" id="8Q49">
    <property type="method" value="EM"/>
    <property type="resolution" value="2.60 A"/>
    <property type="chains" value="R=1-124"/>
</dbReference>
<dbReference type="PDB" id="8Q4A">
    <property type="method" value="EM"/>
    <property type="resolution" value="2.60 A"/>
    <property type="chains" value="R=1-124"/>
</dbReference>
<dbReference type="PDBsum" id="5LC5"/>
<dbReference type="PDBsum" id="5LDW"/>
<dbReference type="PDBsum" id="5LDX"/>
<dbReference type="PDBsum" id="5LNK"/>
<dbReference type="PDBsum" id="5O31"/>
<dbReference type="PDBsum" id="7DGQ"/>
<dbReference type="PDBsum" id="7DGR"/>
<dbReference type="PDBsum" id="7DGS"/>
<dbReference type="PDBsum" id="7DGZ"/>
<dbReference type="PDBsum" id="7DH0"/>
<dbReference type="PDBsum" id="7DKF"/>
<dbReference type="PDBsum" id="7QSD"/>
<dbReference type="PDBsum" id="7QSK"/>
<dbReference type="PDBsum" id="7QSL"/>
<dbReference type="PDBsum" id="7QSM"/>
<dbReference type="PDBsum" id="7QSN"/>
<dbReference type="PDBsum" id="7QSO"/>
<dbReference type="PDBsum" id="7R41"/>
<dbReference type="PDBsum" id="7R42"/>
<dbReference type="PDBsum" id="7R43"/>
<dbReference type="PDBsum" id="7R44"/>
<dbReference type="PDBsum" id="7R45"/>
<dbReference type="PDBsum" id="7R46"/>
<dbReference type="PDBsum" id="7R47"/>
<dbReference type="PDBsum" id="7R48"/>
<dbReference type="PDBsum" id="7R4C"/>
<dbReference type="PDBsum" id="7R4D"/>
<dbReference type="PDBsum" id="7R4F"/>
<dbReference type="PDBsum" id="7R4G"/>
<dbReference type="PDBsum" id="8Q0A"/>
<dbReference type="PDBsum" id="8Q0F"/>
<dbReference type="PDBsum" id="8Q0J"/>
<dbReference type="PDBsum" id="8Q0M"/>
<dbReference type="PDBsum" id="8Q0O"/>
<dbReference type="PDBsum" id="8Q0Q"/>
<dbReference type="PDBsum" id="8Q1P"/>
<dbReference type="PDBsum" id="8Q1U"/>
<dbReference type="PDBsum" id="8Q1Y"/>
<dbReference type="PDBsum" id="8Q25"/>
<dbReference type="PDBsum" id="8Q45"/>
<dbReference type="PDBsum" id="8Q46"/>
<dbReference type="PDBsum" id="8Q47"/>
<dbReference type="PDBsum" id="8Q48"/>
<dbReference type="PDBsum" id="8Q49"/>
<dbReference type="PDBsum" id="8Q4A"/>
<dbReference type="EMDB" id="EMD-14127"/>
<dbReference type="EMDB" id="EMD-14132"/>
<dbReference type="EMDB" id="EMD-14133"/>
<dbReference type="EMDB" id="EMD-14134"/>
<dbReference type="EMDB" id="EMD-14139"/>
<dbReference type="EMDB" id="EMD-14140"/>
<dbReference type="EMDB" id="EMD-14251"/>
<dbReference type="EMDB" id="EMD-14256"/>
<dbReference type="EMDB" id="EMD-14261"/>
<dbReference type="EMDB" id="EMD-14266"/>
<dbReference type="EMDB" id="EMD-14272"/>
<dbReference type="EMDB" id="EMD-14277"/>
<dbReference type="EMDB" id="EMD-14282"/>
<dbReference type="EMDB" id="EMD-14287"/>
<dbReference type="EMDB" id="EMD-14292"/>
<dbReference type="EMDB" id="EMD-14297"/>
<dbReference type="EMDB" id="EMD-14302"/>
<dbReference type="EMDB" id="EMD-14307"/>
<dbReference type="EMDB" id="EMD-18051"/>
<dbReference type="EMDB" id="EMD-18052"/>
<dbReference type="EMDB" id="EMD-18054"/>
<dbReference type="EMDB" id="EMD-18055"/>
<dbReference type="EMDB" id="EMD-18057"/>
<dbReference type="EMDB" id="EMD-18059"/>
<dbReference type="EMDB" id="EMD-18066"/>
<dbReference type="EMDB" id="EMD-18067"/>
<dbReference type="EMDB" id="EMD-18068"/>
<dbReference type="EMDB" id="EMD-18069"/>
<dbReference type="EMDB" id="EMD-18138"/>
<dbReference type="EMDB" id="EMD-18139"/>
<dbReference type="EMDB" id="EMD-18140"/>
<dbReference type="EMDB" id="EMD-18141"/>
<dbReference type="EMDB" id="EMD-18142"/>
<dbReference type="EMDB" id="EMD-18143"/>
<dbReference type="EMDB" id="EMD-30673"/>
<dbReference type="EMDB" id="EMD-30674"/>
<dbReference type="EMDB" id="EMD-30675"/>
<dbReference type="EMDB" id="EMD-30676"/>
<dbReference type="EMDB" id="EMD-30677"/>
<dbReference type="EMDB" id="EMD-30706"/>
<dbReference type="EMDB" id="EMD-3731"/>
<dbReference type="EMDB" id="EMD-4032"/>
<dbReference type="EMDB" id="EMD-4040"/>
<dbReference type="EMDB" id="EMD-4041"/>
<dbReference type="EMDB" id="EMD-4093"/>
<dbReference type="SMR" id="P23934"/>
<dbReference type="CORUM" id="P23934"/>
<dbReference type="DIP" id="DIP-38815N"/>
<dbReference type="FunCoup" id="P23934">
    <property type="interactions" value="1686"/>
</dbReference>
<dbReference type="IntAct" id="P23934">
    <property type="interactions" value="2"/>
</dbReference>
<dbReference type="STRING" id="9913.ENSBTAP00000047840"/>
<dbReference type="TCDB" id="3.D.1.6.1">
    <property type="family name" value="the h+ or na+-translocating nadh dehydrogenase (ndh) family"/>
</dbReference>
<dbReference type="PaxDb" id="9913-ENSBTAP00000047840"/>
<dbReference type="Ensembl" id="ENSBTAT00000013078.3">
    <property type="protein sequence ID" value="ENSBTAP00000013078.2"/>
    <property type="gene ID" value="ENSBTAG00000009914.5"/>
</dbReference>
<dbReference type="GeneID" id="327691"/>
<dbReference type="KEGG" id="bta:327691"/>
<dbReference type="CTD" id="4726"/>
<dbReference type="VEuPathDB" id="HostDB:ENSBTAG00000009914"/>
<dbReference type="VGNC" id="VGNC:31971">
    <property type="gene designation" value="NDUFS6"/>
</dbReference>
<dbReference type="eggNOG" id="KOG3456">
    <property type="taxonomic scope" value="Eukaryota"/>
</dbReference>
<dbReference type="GeneTree" id="ENSGT00390000015775"/>
<dbReference type="HOGENOM" id="CLU_083053_3_2_1"/>
<dbReference type="InParanoid" id="P23934"/>
<dbReference type="OMA" id="TACCDGG"/>
<dbReference type="OrthoDB" id="307899at2759"/>
<dbReference type="Reactome" id="R-BTA-611105">
    <property type="pathway name" value="Respiratory electron transport"/>
</dbReference>
<dbReference type="Reactome" id="R-BTA-6799198">
    <property type="pathway name" value="Complex I biogenesis"/>
</dbReference>
<dbReference type="Proteomes" id="UP000009136">
    <property type="component" value="Chromosome 20"/>
</dbReference>
<dbReference type="Bgee" id="ENSBTAG00000009914">
    <property type="expression patterns" value="Expressed in tongue muscle and 109 other cell types or tissues"/>
</dbReference>
<dbReference type="GO" id="GO:0005743">
    <property type="term" value="C:mitochondrial inner membrane"/>
    <property type="evidence" value="ECO:0007669"/>
    <property type="project" value="UniProtKB-SubCell"/>
</dbReference>
<dbReference type="GO" id="GO:0005739">
    <property type="term" value="C:mitochondrion"/>
    <property type="evidence" value="ECO:0000305"/>
    <property type="project" value="UniProtKB"/>
</dbReference>
<dbReference type="GO" id="GO:0045271">
    <property type="term" value="C:respiratory chain complex I"/>
    <property type="evidence" value="ECO:0000314"/>
    <property type="project" value="UniProtKB"/>
</dbReference>
<dbReference type="GO" id="GO:0006120">
    <property type="term" value="P:mitochondrial electron transport, NADH to ubiquinone"/>
    <property type="evidence" value="ECO:0000318"/>
    <property type="project" value="GO_Central"/>
</dbReference>
<dbReference type="FunFam" id="2.60.260.40:FF:000002">
    <property type="entry name" value="NADH dehydrogenase [ubiquinone] iron-sulfur protein 6, mitochondrial"/>
    <property type="match status" value="1"/>
</dbReference>
<dbReference type="Gene3D" id="2.60.260.40">
    <property type="entry name" value="q5lls5 like domains"/>
    <property type="match status" value="1"/>
</dbReference>
<dbReference type="InterPro" id="IPR016668">
    <property type="entry name" value="NDUFS6"/>
</dbReference>
<dbReference type="InterPro" id="IPR019401">
    <property type="entry name" value="Znf_CHCC"/>
</dbReference>
<dbReference type="PANTHER" id="PTHR13156:SF0">
    <property type="entry name" value="NADH DEHYDROGENASE [UBIQUINONE] IRON-SULFUR PROTEIN 6, MITOCHONDRIAL"/>
    <property type="match status" value="1"/>
</dbReference>
<dbReference type="PANTHER" id="PTHR13156">
    <property type="entry name" value="NADH-UBIQUINONE OXIDOREDUCTASE 13 KD-A SUBUNIT"/>
    <property type="match status" value="1"/>
</dbReference>
<dbReference type="Pfam" id="PF10276">
    <property type="entry name" value="zf-CHCC"/>
    <property type="match status" value="1"/>
</dbReference>
<dbReference type="PIRSF" id="PIRSF016564">
    <property type="entry name" value="CI-13KD-A"/>
    <property type="match status" value="1"/>
</dbReference>
<name>NDUS6_BOVIN</name>
<keyword id="KW-0002">3D-structure</keyword>
<keyword id="KW-0903">Direct protein sequencing</keyword>
<keyword id="KW-0249">Electron transport</keyword>
<keyword id="KW-0472">Membrane</keyword>
<keyword id="KW-0496">Mitochondrion</keyword>
<keyword id="KW-0999">Mitochondrion inner membrane</keyword>
<keyword id="KW-1185">Reference proteome</keyword>
<keyword id="KW-0679">Respiratory chain</keyword>
<keyword id="KW-0809">Transit peptide</keyword>
<keyword id="KW-0813">Transport</keyword>
<accession>P23934</accession>
<gene>
    <name type="primary">NDUFS6</name>
</gene>
<sequence>MAAVLTFLRFLGRGGAVTRGLPGGARCFGVRTSPTGEKVTHTGQVYDDGDYRKVRFVGRQKEVNENFAIDLIAEQPVSQVGSRVISCDGGGGALGHPRVYINLDKETKTGTCGYCGLQFRQQHH</sequence>